<accession>A6L5I2</accession>
<sequence>MAVELKELTKRSENYSQWYNDLVVKADLAEQSPVRGCMVIKPYGYAIWEKMQRQLDDMFKETGHVNAYFPLLIPKSYLSREAEHVEGFAKECAVVTHYRLKNAEDGSGVIVDPAAKLEEELIIRPTSETIIWSTYKNWINSYRDLPILCNQWANVMRWEMRTRLFLRTAEFLWQEGHTAHATREEAEAEAQKMLHVYGDFAEKYMAVPVIKGVKSANERFAGALDTYTIEGLMQDGKALQCGTSHFLGQNFAKAFNVQFVDKNNKLDYVWATSWGVSTRLMGALIMTHSDDNGLVLPPHLAPIQVVIVPIYKNDEMLKKIDAKVEGIVNKLKAMGISVKYDNADNKRPGFKFADYELKGVPVRLVMGGRDLENNTMEVMRRDTLEKETRSCDGIEEYVQQLLEDIQNNIYQKALNYRNEHIVKVDSYDDFKEQIEKGGFILAHWDGTPETEDRIKEETKATIRCLPFDADEESLTPGKCMVTGKPSARRVLFARAY</sequence>
<organism>
    <name type="scientific">Phocaeicola vulgatus (strain ATCC 8482 / DSM 1447 / JCM 5826 / CCUG 4940 / NBRC 14291 / NCTC 11154)</name>
    <name type="common">Bacteroides vulgatus</name>
    <dbReference type="NCBI Taxonomy" id="435590"/>
    <lineage>
        <taxon>Bacteria</taxon>
        <taxon>Pseudomonadati</taxon>
        <taxon>Bacteroidota</taxon>
        <taxon>Bacteroidia</taxon>
        <taxon>Bacteroidales</taxon>
        <taxon>Bacteroidaceae</taxon>
        <taxon>Phocaeicola</taxon>
    </lineage>
</organism>
<dbReference type="EC" id="6.1.1.15" evidence="1"/>
<dbReference type="EMBL" id="CP000139">
    <property type="protein sequence ID" value="ABR40946.1"/>
    <property type="molecule type" value="Genomic_DNA"/>
</dbReference>
<dbReference type="RefSeq" id="WP_005842041.1">
    <property type="nucleotide sequence ID" value="NZ_JANSWM010000114.1"/>
</dbReference>
<dbReference type="SMR" id="A6L5I2"/>
<dbReference type="STRING" id="435590.BVU_3320"/>
<dbReference type="PaxDb" id="435590-BVU_3320"/>
<dbReference type="GeneID" id="5304281"/>
<dbReference type="KEGG" id="bvu:BVU_3320"/>
<dbReference type="eggNOG" id="COG0442">
    <property type="taxonomic scope" value="Bacteria"/>
</dbReference>
<dbReference type="HOGENOM" id="CLU_001882_4_2_10"/>
<dbReference type="BioCyc" id="BVUL435590:G1G59-3442-MONOMER"/>
<dbReference type="Proteomes" id="UP000002861">
    <property type="component" value="Chromosome"/>
</dbReference>
<dbReference type="GO" id="GO:0017101">
    <property type="term" value="C:aminoacyl-tRNA synthetase multienzyme complex"/>
    <property type="evidence" value="ECO:0007669"/>
    <property type="project" value="TreeGrafter"/>
</dbReference>
<dbReference type="GO" id="GO:0005737">
    <property type="term" value="C:cytoplasm"/>
    <property type="evidence" value="ECO:0007669"/>
    <property type="project" value="UniProtKB-SubCell"/>
</dbReference>
<dbReference type="GO" id="GO:0005524">
    <property type="term" value="F:ATP binding"/>
    <property type="evidence" value="ECO:0007669"/>
    <property type="project" value="UniProtKB-UniRule"/>
</dbReference>
<dbReference type="GO" id="GO:0004827">
    <property type="term" value="F:proline-tRNA ligase activity"/>
    <property type="evidence" value="ECO:0007669"/>
    <property type="project" value="UniProtKB-UniRule"/>
</dbReference>
<dbReference type="GO" id="GO:0006433">
    <property type="term" value="P:prolyl-tRNA aminoacylation"/>
    <property type="evidence" value="ECO:0007669"/>
    <property type="project" value="UniProtKB-UniRule"/>
</dbReference>
<dbReference type="CDD" id="cd00862">
    <property type="entry name" value="ProRS_anticodon_zinc"/>
    <property type="match status" value="1"/>
</dbReference>
<dbReference type="CDD" id="cd00778">
    <property type="entry name" value="ProRS_core_arch_euk"/>
    <property type="match status" value="1"/>
</dbReference>
<dbReference type="FunFam" id="3.30.930.10:FF:000023">
    <property type="entry name" value="Proline--tRNA ligase"/>
    <property type="match status" value="1"/>
</dbReference>
<dbReference type="Gene3D" id="3.40.50.800">
    <property type="entry name" value="Anticodon-binding domain"/>
    <property type="match status" value="1"/>
</dbReference>
<dbReference type="Gene3D" id="3.30.930.10">
    <property type="entry name" value="Bira Bifunctional Protein, Domain 2"/>
    <property type="match status" value="1"/>
</dbReference>
<dbReference type="Gene3D" id="3.30.110.30">
    <property type="entry name" value="C-terminal domain of ProRS"/>
    <property type="match status" value="1"/>
</dbReference>
<dbReference type="HAMAP" id="MF_01571">
    <property type="entry name" value="Pro_tRNA_synth_type3"/>
    <property type="match status" value="1"/>
</dbReference>
<dbReference type="InterPro" id="IPR002314">
    <property type="entry name" value="aa-tRNA-synt_IIb"/>
</dbReference>
<dbReference type="InterPro" id="IPR006195">
    <property type="entry name" value="aa-tRNA-synth_II"/>
</dbReference>
<dbReference type="InterPro" id="IPR045864">
    <property type="entry name" value="aa-tRNA-synth_II/BPL/LPL"/>
</dbReference>
<dbReference type="InterPro" id="IPR004154">
    <property type="entry name" value="Anticodon-bd"/>
</dbReference>
<dbReference type="InterPro" id="IPR036621">
    <property type="entry name" value="Anticodon-bd_dom_sf"/>
</dbReference>
<dbReference type="InterPro" id="IPR004499">
    <property type="entry name" value="Pro-tRNA-ligase_IIa_arc-type"/>
</dbReference>
<dbReference type="InterPro" id="IPR016061">
    <property type="entry name" value="Pro-tRNA_ligase_II_C"/>
</dbReference>
<dbReference type="InterPro" id="IPR017449">
    <property type="entry name" value="Pro-tRNA_synth_II"/>
</dbReference>
<dbReference type="InterPro" id="IPR033721">
    <property type="entry name" value="ProRS_core_arch_euk"/>
</dbReference>
<dbReference type="NCBIfam" id="TIGR00408">
    <property type="entry name" value="proS_fam_I"/>
    <property type="match status" value="1"/>
</dbReference>
<dbReference type="PANTHER" id="PTHR43382:SF2">
    <property type="entry name" value="BIFUNCTIONAL GLUTAMATE_PROLINE--TRNA LIGASE"/>
    <property type="match status" value="1"/>
</dbReference>
<dbReference type="PANTHER" id="PTHR43382">
    <property type="entry name" value="PROLYL-TRNA SYNTHETASE"/>
    <property type="match status" value="1"/>
</dbReference>
<dbReference type="Pfam" id="PF03129">
    <property type="entry name" value="HGTP_anticodon"/>
    <property type="match status" value="1"/>
</dbReference>
<dbReference type="Pfam" id="PF09180">
    <property type="entry name" value="ProRS-C_1"/>
    <property type="match status" value="1"/>
</dbReference>
<dbReference type="Pfam" id="PF00587">
    <property type="entry name" value="tRNA-synt_2b"/>
    <property type="match status" value="1"/>
</dbReference>
<dbReference type="SMART" id="SM00946">
    <property type="entry name" value="ProRS-C_1"/>
    <property type="match status" value="1"/>
</dbReference>
<dbReference type="SUPFAM" id="SSF64586">
    <property type="entry name" value="C-terminal domain of ProRS"/>
    <property type="match status" value="1"/>
</dbReference>
<dbReference type="SUPFAM" id="SSF52954">
    <property type="entry name" value="Class II aaRS ABD-related"/>
    <property type="match status" value="1"/>
</dbReference>
<dbReference type="SUPFAM" id="SSF55681">
    <property type="entry name" value="Class II aaRS and biotin synthetases"/>
    <property type="match status" value="1"/>
</dbReference>
<dbReference type="PROSITE" id="PS50862">
    <property type="entry name" value="AA_TRNA_LIGASE_II"/>
    <property type="match status" value="1"/>
</dbReference>
<name>SYP_PHOV8</name>
<comment type="function">
    <text evidence="1">Catalyzes the attachment of proline to tRNA(Pro) in a two-step reaction: proline is first activated by ATP to form Pro-AMP and then transferred to the acceptor end of tRNA(Pro).</text>
</comment>
<comment type="catalytic activity">
    <reaction evidence="1">
        <text>tRNA(Pro) + L-proline + ATP = L-prolyl-tRNA(Pro) + AMP + diphosphate</text>
        <dbReference type="Rhea" id="RHEA:14305"/>
        <dbReference type="Rhea" id="RHEA-COMP:9700"/>
        <dbReference type="Rhea" id="RHEA-COMP:9702"/>
        <dbReference type="ChEBI" id="CHEBI:30616"/>
        <dbReference type="ChEBI" id="CHEBI:33019"/>
        <dbReference type="ChEBI" id="CHEBI:60039"/>
        <dbReference type="ChEBI" id="CHEBI:78442"/>
        <dbReference type="ChEBI" id="CHEBI:78532"/>
        <dbReference type="ChEBI" id="CHEBI:456215"/>
        <dbReference type="EC" id="6.1.1.15"/>
    </reaction>
</comment>
<comment type="subunit">
    <text evidence="1">Homodimer.</text>
</comment>
<comment type="subcellular location">
    <subcellularLocation>
        <location evidence="1">Cytoplasm</location>
    </subcellularLocation>
</comment>
<comment type="domain">
    <text evidence="1">Consists of three domains: the N-terminal catalytic domain, the anticodon-binding domain and the C-terminal extension.</text>
</comment>
<comment type="similarity">
    <text evidence="1">Belongs to the class-II aminoacyl-tRNA synthetase family. ProS type 3 subfamily.</text>
</comment>
<gene>
    <name evidence="1" type="primary">proS</name>
    <name type="ordered locus">BVU_3320</name>
</gene>
<keyword id="KW-0030">Aminoacyl-tRNA synthetase</keyword>
<keyword id="KW-0067">ATP-binding</keyword>
<keyword id="KW-0963">Cytoplasm</keyword>
<keyword id="KW-0436">Ligase</keyword>
<keyword id="KW-0547">Nucleotide-binding</keyword>
<keyword id="KW-0648">Protein biosynthesis</keyword>
<feature type="chain" id="PRO_1000069190" description="Proline--tRNA ligase">
    <location>
        <begin position="1"/>
        <end position="496"/>
    </location>
</feature>
<reference key="1">
    <citation type="journal article" date="2007" name="PLoS Biol.">
        <title>Evolution of symbiotic bacteria in the distal human intestine.</title>
        <authorList>
            <person name="Xu J."/>
            <person name="Mahowald M.A."/>
            <person name="Ley R.E."/>
            <person name="Lozupone C.A."/>
            <person name="Hamady M."/>
            <person name="Martens E.C."/>
            <person name="Henrissat B."/>
            <person name="Coutinho P.M."/>
            <person name="Minx P."/>
            <person name="Latreille P."/>
            <person name="Cordum H."/>
            <person name="Van Brunt A."/>
            <person name="Kim K."/>
            <person name="Fulton R.S."/>
            <person name="Fulton L.A."/>
            <person name="Clifton S.W."/>
            <person name="Wilson R.K."/>
            <person name="Knight R.D."/>
            <person name="Gordon J.I."/>
        </authorList>
    </citation>
    <scope>NUCLEOTIDE SEQUENCE [LARGE SCALE GENOMIC DNA]</scope>
    <source>
        <strain>ATCC 8482 / DSM 1447 / JCM 5826 / CCUG 4940 / NBRC 14291 / NCTC 11154</strain>
    </source>
</reference>
<protein>
    <recommendedName>
        <fullName evidence="1">Proline--tRNA ligase</fullName>
        <ecNumber evidence="1">6.1.1.15</ecNumber>
    </recommendedName>
    <alternativeName>
        <fullName evidence="1">Prolyl-tRNA synthetase</fullName>
        <shortName evidence="1">ProRS</shortName>
    </alternativeName>
</protein>
<proteinExistence type="inferred from homology"/>
<evidence type="ECO:0000255" key="1">
    <source>
        <dbReference type="HAMAP-Rule" id="MF_01571"/>
    </source>
</evidence>